<reference key="1">
    <citation type="journal article" date="2009" name="Appl. Environ. Microbiol.">
        <title>Complete genome sequence of the chemolithoautotrophic marine magnetotactic coccus strain MC-1.</title>
        <authorList>
            <person name="Schubbe S."/>
            <person name="Williams T.J."/>
            <person name="Xie G."/>
            <person name="Kiss H.E."/>
            <person name="Brettin T.S."/>
            <person name="Martinez D."/>
            <person name="Ross C.A."/>
            <person name="Schuler D."/>
            <person name="Cox B.L."/>
            <person name="Nealson K.H."/>
            <person name="Bazylinski D.A."/>
        </authorList>
    </citation>
    <scope>NUCLEOTIDE SEQUENCE [LARGE SCALE GENOMIC DNA]</scope>
    <source>
        <strain>ATCC BAA-1437 / JCM 17883 / MC-1</strain>
    </source>
</reference>
<sequence>MTDRKEHKMKPGRRPTEGMTPSQERIMQVIRNAIDRDGLPPTVKEIAEALGMKTPSAHEQVQKLVKKGFIRRTPRKARSIEIVEQSPEEEPVEKKPDVARLVPVPIIGEVAAGIPILAVENHIGELLMDSRTARGPCFALKVKGDSMIDAEIFEGDYVVVRHQALAENGDIVVAILDGEATVKRLYISEETIELRPENRSYQPIVVPPGGDIRILGKVLAVRGHGAANNNE</sequence>
<dbReference type="EC" id="3.4.21.88" evidence="1"/>
<dbReference type="EMBL" id="CP000471">
    <property type="protein sequence ID" value="ABK44585.1"/>
    <property type="molecule type" value="Genomic_DNA"/>
</dbReference>
<dbReference type="RefSeq" id="WP_011713713.1">
    <property type="nucleotide sequence ID" value="NC_008576.1"/>
</dbReference>
<dbReference type="SMR" id="A0L9E2"/>
<dbReference type="STRING" id="156889.Mmc1_2084"/>
<dbReference type="MEROPS" id="S24.001"/>
<dbReference type="KEGG" id="mgm:Mmc1_2084"/>
<dbReference type="eggNOG" id="COG1974">
    <property type="taxonomic scope" value="Bacteria"/>
</dbReference>
<dbReference type="HOGENOM" id="CLU_066192_45_1_5"/>
<dbReference type="OrthoDB" id="9802364at2"/>
<dbReference type="Proteomes" id="UP000002586">
    <property type="component" value="Chromosome"/>
</dbReference>
<dbReference type="CollecTF" id="EXPREG_00000160"/>
<dbReference type="GO" id="GO:0032993">
    <property type="term" value="C:protein-DNA complex"/>
    <property type="evidence" value="ECO:0000315"/>
    <property type="project" value="CollecTF"/>
</dbReference>
<dbReference type="GO" id="GO:0043565">
    <property type="term" value="F:sequence-specific DNA binding"/>
    <property type="evidence" value="ECO:0000315"/>
    <property type="project" value="CollecTF"/>
</dbReference>
<dbReference type="GO" id="GO:0004252">
    <property type="term" value="F:serine-type endopeptidase activity"/>
    <property type="evidence" value="ECO:0007669"/>
    <property type="project" value="UniProtKB-UniRule"/>
</dbReference>
<dbReference type="GO" id="GO:0006281">
    <property type="term" value="P:DNA repair"/>
    <property type="evidence" value="ECO:0007669"/>
    <property type="project" value="UniProtKB-UniRule"/>
</dbReference>
<dbReference type="GO" id="GO:0006260">
    <property type="term" value="P:DNA replication"/>
    <property type="evidence" value="ECO:0007669"/>
    <property type="project" value="UniProtKB-UniRule"/>
</dbReference>
<dbReference type="GO" id="GO:0045892">
    <property type="term" value="P:negative regulation of DNA-templated transcription"/>
    <property type="evidence" value="ECO:0007669"/>
    <property type="project" value="UniProtKB-UniRule"/>
</dbReference>
<dbReference type="GO" id="GO:0006508">
    <property type="term" value="P:proteolysis"/>
    <property type="evidence" value="ECO:0007669"/>
    <property type="project" value="InterPro"/>
</dbReference>
<dbReference type="GO" id="GO:0009432">
    <property type="term" value="P:SOS response"/>
    <property type="evidence" value="ECO:0007669"/>
    <property type="project" value="UniProtKB-UniRule"/>
</dbReference>
<dbReference type="CDD" id="cd06529">
    <property type="entry name" value="S24_LexA-like"/>
    <property type="match status" value="1"/>
</dbReference>
<dbReference type="FunFam" id="2.10.109.10:FF:000001">
    <property type="entry name" value="LexA repressor"/>
    <property type="match status" value="1"/>
</dbReference>
<dbReference type="Gene3D" id="2.10.109.10">
    <property type="entry name" value="Umud Fragment, subunit A"/>
    <property type="match status" value="1"/>
</dbReference>
<dbReference type="Gene3D" id="1.10.10.10">
    <property type="entry name" value="Winged helix-like DNA-binding domain superfamily/Winged helix DNA-binding domain"/>
    <property type="match status" value="1"/>
</dbReference>
<dbReference type="HAMAP" id="MF_00015">
    <property type="entry name" value="LexA"/>
    <property type="match status" value="1"/>
</dbReference>
<dbReference type="InterPro" id="IPR006200">
    <property type="entry name" value="LexA"/>
</dbReference>
<dbReference type="InterPro" id="IPR039418">
    <property type="entry name" value="LexA-like"/>
</dbReference>
<dbReference type="InterPro" id="IPR036286">
    <property type="entry name" value="LexA/Signal_pep-like_sf"/>
</dbReference>
<dbReference type="InterPro" id="IPR006199">
    <property type="entry name" value="LexA_DNA-bd_dom"/>
</dbReference>
<dbReference type="InterPro" id="IPR050077">
    <property type="entry name" value="LexA_repressor"/>
</dbReference>
<dbReference type="InterPro" id="IPR006197">
    <property type="entry name" value="Peptidase_S24_LexA"/>
</dbReference>
<dbReference type="InterPro" id="IPR015927">
    <property type="entry name" value="Peptidase_S24_S26A/B/C"/>
</dbReference>
<dbReference type="InterPro" id="IPR036388">
    <property type="entry name" value="WH-like_DNA-bd_sf"/>
</dbReference>
<dbReference type="InterPro" id="IPR036390">
    <property type="entry name" value="WH_DNA-bd_sf"/>
</dbReference>
<dbReference type="NCBIfam" id="TIGR00498">
    <property type="entry name" value="lexA"/>
    <property type="match status" value="1"/>
</dbReference>
<dbReference type="PANTHER" id="PTHR33516">
    <property type="entry name" value="LEXA REPRESSOR"/>
    <property type="match status" value="1"/>
</dbReference>
<dbReference type="PANTHER" id="PTHR33516:SF2">
    <property type="entry name" value="LEXA REPRESSOR-RELATED"/>
    <property type="match status" value="1"/>
</dbReference>
<dbReference type="Pfam" id="PF01726">
    <property type="entry name" value="LexA_DNA_bind"/>
    <property type="match status" value="1"/>
</dbReference>
<dbReference type="Pfam" id="PF00717">
    <property type="entry name" value="Peptidase_S24"/>
    <property type="match status" value="1"/>
</dbReference>
<dbReference type="PRINTS" id="PR00726">
    <property type="entry name" value="LEXASERPTASE"/>
</dbReference>
<dbReference type="SUPFAM" id="SSF51306">
    <property type="entry name" value="LexA/Signal peptidase"/>
    <property type="match status" value="1"/>
</dbReference>
<dbReference type="SUPFAM" id="SSF46785">
    <property type="entry name" value="Winged helix' DNA-binding domain"/>
    <property type="match status" value="1"/>
</dbReference>
<accession>A0L9E2</accession>
<organism>
    <name type="scientific">Magnetococcus marinus (strain ATCC BAA-1437 / JCM 17883 / MC-1)</name>
    <dbReference type="NCBI Taxonomy" id="156889"/>
    <lineage>
        <taxon>Bacteria</taxon>
        <taxon>Pseudomonadati</taxon>
        <taxon>Pseudomonadota</taxon>
        <taxon>Alphaproteobacteria</taxon>
        <taxon>Magnetococcales</taxon>
        <taxon>Magnetococcaceae</taxon>
        <taxon>Magnetococcus</taxon>
    </lineage>
</organism>
<gene>
    <name evidence="1" type="primary">lexA</name>
    <name type="ordered locus">Mmc1_2084</name>
</gene>
<feature type="chain" id="PRO_0000322741" description="LexA repressor">
    <location>
        <begin position="1"/>
        <end position="231"/>
    </location>
</feature>
<feature type="DNA-binding region" description="H-T-H motif" evidence="1">
    <location>
        <begin position="43"/>
        <end position="62"/>
    </location>
</feature>
<feature type="region of interest" description="Disordered" evidence="2">
    <location>
        <begin position="1"/>
        <end position="24"/>
    </location>
</feature>
<feature type="active site" description="For autocatalytic cleavage activity" evidence="1">
    <location>
        <position position="146"/>
    </location>
</feature>
<feature type="active site" description="For autocatalytic cleavage activity" evidence="1">
    <location>
        <position position="183"/>
    </location>
</feature>
<feature type="site" description="Cleavage; by autolysis" evidence="1">
    <location>
        <begin position="112"/>
        <end position="113"/>
    </location>
</feature>
<name>LEXA_MAGMM</name>
<proteinExistence type="inferred from homology"/>
<protein>
    <recommendedName>
        <fullName evidence="1">LexA repressor</fullName>
        <ecNumber evidence="1">3.4.21.88</ecNumber>
    </recommendedName>
</protein>
<evidence type="ECO:0000255" key="1">
    <source>
        <dbReference type="HAMAP-Rule" id="MF_00015"/>
    </source>
</evidence>
<evidence type="ECO:0000256" key="2">
    <source>
        <dbReference type="SAM" id="MobiDB-lite"/>
    </source>
</evidence>
<comment type="function">
    <text evidence="1">Represses a number of genes involved in the response to DNA damage (SOS response), including recA and lexA. In the presence of single-stranded DNA, RecA interacts with LexA causing an autocatalytic cleavage which disrupts the DNA-binding part of LexA, leading to derepression of the SOS regulon and eventually DNA repair.</text>
</comment>
<comment type="catalytic activity">
    <reaction evidence="1">
        <text>Hydrolysis of Ala-|-Gly bond in repressor LexA.</text>
        <dbReference type="EC" id="3.4.21.88"/>
    </reaction>
</comment>
<comment type="subunit">
    <text evidence="1">Homodimer.</text>
</comment>
<comment type="similarity">
    <text evidence="1">Belongs to the peptidase S24 family.</text>
</comment>
<keyword id="KW-0068">Autocatalytic cleavage</keyword>
<keyword id="KW-0227">DNA damage</keyword>
<keyword id="KW-0234">DNA repair</keyword>
<keyword id="KW-0235">DNA replication</keyword>
<keyword id="KW-0238">DNA-binding</keyword>
<keyword id="KW-0378">Hydrolase</keyword>
<keyword id="KW-1185">Reference proteome</keyword>
<keyword id="KW-0678">Repressor</keyword>
<keyword id="KW-0742">SOS response</keyword>
<keyword id="KW-0804">Transcription</keyword>
<keyword id="KW-0805">Transcription regulation</keyword>